<dbReference type="EMBL" id="CP001113">
    <property type="protein sequence ID" value="ACF63066.1"/>
    <property type="molecule type" value="Genomic_DNA"/>
</dbReference>
<dbReference type="RefSeq" id="WP_001196059.1">
    <property type="nucleotide sequence ID" value="NZ_CCMR01000003.1"/>
</dbReference>
<dbReference type="SMR" id="B4T3F4"/>
<dbReference type="KEGG" id="see:SNSL254_A4754"/>
<dbReference type="HOGENOM" id="CLU_078938_4_1_6"/>
<dbReference type="Proteomes" id="UP000008824">
    <property type="component" value="Chromosome"/>
</dbReference>
<dbReference type="GO" id="GO:1990904">
    <property type="term" value="C:ribonucleoprotein complex"/>
    <property type="evidence" value="ECO:0007669"/>
    <property type="project" value="UniProtKB-KW"/>
</dbReference>
<dbReference type="GO" id="GO:0005840">
    <property type="term" value="C:ribosome"/>
    <property type="evidence" value="ECO:0007669"/>
    <property type="project" value="UniProtKB-KW"/>
</dbReference>
<dbReference type="GO" id="GO:0019843">
    <property type="term" value="F:rRNA binding"/>
    <property type="evidence" value="ECO:0007669"/>
    <property type="project" value="UniProtKB-UniRule"/>
</dbReference>
<dbReference type="GO" id="GO:0003735">
    <property type="term" value="F:structural constituent of ribosome"/>
    <property type="evidence" value="ECO:0007669"/>
    <property type="project" value="InterPro"/>
</dbReference>
<dbReference type="GO" id="GO:0006412">
    <property type="term" value="P:translation"/>
    <property type="evidence" value="ECO:0007669"/>
    <property type="project" value="UniProtKB-UniRule"/>
</dbReference>
<dbReference type="FunFam" id="3.10.430.100:FF:000001">
    <property type="entry name" value="50S ribosomal protein L9"/>
    <property type="match status" value="1"/>
</dbReference>
<dbReference type="FunFam" id="3.40.5.10:FF:000001">
    <property type="entry name" value="50S ribosomal protein L9"/>
    <property type="match status" value="1"/>
</dbReference>
<dbReference type="Gene3D" id="3.10.430.100">
    <property type="entry name" value="Ribosomal protein L9, C-terminal domain"/>
    <property type="match status" value="1"/>
</dbReference>
<dbReference type="Gene3D" id="3.40.5.10">
    <property type="entry name" value="Ribosomal protein L9, N-terminal domain"/>
    <property type="match status" value="1"/>
</dbReference>
<dbReference type="HAMAP" id="MF_00503">
    <property type="entry name" value="Ribosomal_bL9"/>
    <property type="match status" value="1"/>
</dbReference>
<dbReference type="InterPro" id="IPR000244">
    <property type="entry name" value="Ribosomal_bL9"/>
</dbReference>
<dbReference type="InterPro" id="IPR009027">
    <property type="entry name" value="Ribosomal_bL9/RNase_H1_N"/>
</dbReference>
<dbReference type="InterPro" id="IPR020594">
    <property type="entry name" value="Ribosomal_bL9_bac/chp"/>
</dbReference>
<dbReference type="InterPro" id="IPR020069">
    <property type="entry name" value="Ribosomal_bL9_C"/>
</dbReference>
<dbReference type="InterPro" id="IPR036791">
    <property type="entry name" value="Ribosomal_bL9_C_sf"/>
</dbReference>
<dbReference type="InterPro" id="IPR020070">
    <property type="entry name" value="Ribosomal_bL9_N"/>
</dbReference>
<dbReference type="InterPro" id="IPR036935">
    <property type="entry name" value="Ribosomal_bL9_N_sf"/>
</dbReference>
<dbReference type="NCBIfam" id="TIGR00158">
    <property type="entry name" value="L9"/>
    <property type="match status" value="1"/>
</dbReference>
<dbReference type="PANTHER" id="PTHR21368">
    <property type="entry name" value="50S RIBOSOMAL PROTEIN L9"/>
    <property type="match status" value="1"/>
</dbReference>
<dbReference type="Pfam" id="PF03948">
    <property type="entry name" value="Ribosomal_L9_C"/>
    <property type="match status" value="1"/>
</dbReference>
<dbReference type="Pfam" id="PF01281">
    <property type="entry name" value="Ribosomal_L9_N"/>
    <property type="match status" value="1"/>
</dbReference>
<dbReference type="SUPFAM" id="SSF55658">
    <property type="entry name" value="L9 N-domain-like"/>
    <property type="match status" value="1"/>
</dbReference>
<dbReference type="SUPFAM" id="SSF55653">
    <property type="entry name" value="Ribosomal protein L9 C-domain"/>
    <property type="match status" value="1"/>
</dbReference>
<dbReference type="PROSITE" id="PS00651">
    <property type="entry name" value="RIBOSOMAL_L9"/>
    <property type="match status" value="1"/>
</dbReference>
<protein>
    <recommendedName>
        <fullName evidence="1">Large ribosomal subunit protein bL9</fullName>
    </recommendedName>
    <alternativeName>
        <fullName evidence="2">50S ribosomal protein L9</fullName>
    </alternativeName>
</protein>
<name>RL9_SALNS</name>
<organism>
    <name type="scientific">Salmonella newport (strain SL254)</name>
    <dbReference type="NCBI Taxonomy" id="423368"/>
    <lineage>
        <taxon>Bacteria</taxon>
        <taxon>Pseudomonadati</taxon>
        <taxon>Pseudomonadota</taxon>
        <taxon>Gammaproteobacteria</taxon>
        <taxon>Enterobacterales</taxon>
        <taxon>Enterobacteriaceae</taxon>
        <taxon>Salmonella</taxon>
    </lineage>
</organism>
<proteinExistence type="inferred from homology"/>
<evidence type="ECO:0000255" key="1">
    <source>
        <dbReference type="HAMAP-Rule" id="MF_00503"/>
    </source>
</evidence>
<evidence type="ECO:0000305" key="2"/>
<gene>
    <name evidence="1" type="primary">rplI</name>
    <name type="ordered locus">SNSL254_A4754</name>
</gene>
<sequence length="149" mass="15784">MQVILLDKVANLGSLGDQVNVKAGYARNFLVPKGKAVPATKKNVEYFEARRAELEAKLADVLAAANARAEKINALETVTIASKAGDEGKLFGSIGTRDIADAVTAAGVDVAKSEVRLPNGVLRTTGEHEVNFQVHSEVFAKVIINVVAE</sequence>
<feature type="chain" id="PRO_1000126968" description="Large ribosomal subunit protein bL9">
    <location>
        <begin position="1"/>
        <end position="149"/>
    </location>
</feature>
<reference key="1">
    <citation type="journal article" date="2011" name="J. Bacteriol.">
        <title>Comparative genomics of 28 Salmonella enterica isolates: evidence for CRISPR-mediated adaptive sublineage evolution.</title>
        <authorList>
            <person name="Fricke W.F."/>
            <person name="Mammel M.K."/>
            <person name="McDermott P.F."/>
            <person name="Tartera C."/>
            <person name="White D.G."/>
            <person name="Leclerc J.E."/>
            <person name="Ravel J."/>
            <person name="Cebula T.A."/>
        </authorList>
    </citation>
    <scope>NUCLEOTIDE SEQUENCE [LARGE SCALE GENOMIC DNA]</scope>
    <source>
        <strain>SL254</strain>
    </source>
</reference>
<comment type="function">
    <text evidence="1">Binds to the 23S rRNA.</text>
</comment>
<comment type="similarity">
    <text evidence="1">Belongs to the bacterial ribosomal protein bL9 family.</text>
</comment>
<accession>B4T3F4</accession>
<keyword id="KW-0687">Ribonucleoprotein</keyword>
<keyword id="KW-0689">Ribosomal protein</keyword>
<keyword id="KW-0694">RNA-binding</keyword>
<keyword id="KW-0699">rRNA-binding</keyword>